<protein>
    <recommendedName>
        <fullName evidence="1">tRNA pseudouridine synthase B</fullName>
        <ecNumber evidence="1">5.4.99.25</ecNumber>
    </recommendedName>
    <alternativeName>
        <fullName evidence="1">tRNA pseudouridine(55) synthase</fullName>
        <shortName evidence="1">Psi55 synthase</shortName>
    </alternativeName>
    <alternativeName>
        <fullName evidence="1">tRNA pseudouridylate synthase</fullName>
    </alternativeName>
    <alternativeName>
        <fullName evidence="1">tRNA-uridine isomerase</fullName>
    </alternativeName>
</protein>
<comment type="function">
    <text evidence="1">Responsible for synthesis of pseudouridine from uracil-55 in the psi GC loop of transfer RNAs.</text>
</comment>
<comment type="catalytic activity">
    <reaction evidence="1">
        <text>uridine(55) in tRNA = pseudouridine(55) in tRNA</text>
        <dbReference type="Rhea" id="RHEA:42532"/>
        <dbReference type="Rhea" id="RHEA-COMP:10101"/>
        <dbReference type="Rhea" id="RHEA-COMP:10102"/>
        <dbReference type="ChEBI" id="CHEBI:65314"/>
        <dbReference type="ChEBI" id="CHEBI:65315"/>
        <dbReference type="EC" id="5.4.99.25"/>
    </reaction>
</comment>
<comment type="similarity">
    <text evidence="1">Belongs to the pseudouridine synthase TruB family. Type 1 subfamily.</text>
</comment>
<feature type="chain" id="PRO_0000121890" description="tRNA pseudouridine synthase B">
    <location>
        <begin position="1"/>
        <end position="325"/>
    </location>
</feature>
<feature type="active site" description="Nucleophile" evidence="1">
    <location>
        <position position="49"/>
    </location>
</feature>
<name>TRUB_RHILO</name>
<evidence type="ECO:0000255" key="1">
    <source>
        <dbReference type="HAMAP-Rule" id="MF_01080"/>
    </source>
</evidence>
<keyword id="KW-0413">Isomerase</keyword>
<keyword id="KW-0819">tRNA processing</keyword>
<dbReference type="EC" id="5.4.99.25" evidence="1"/>
<dbReference type="EMBL" id="BA000012">
    <property type="protein sequence ID" value="BAB51986.1"/>
    <property type="molecule type" value="Genomic_DNA"/>
</dbReference>
<dbReference type="RefSeq" id="WP_010913324.1">
    <property type="nucleotide sequence ID" value="NC_002678.2"/>
</dbReference>
<dbReference type="SMR" id="Q98BI6"/>
<dbReference type="KEGG" id="mlo:mlr5558"/>
<dbReference type="PATRIC" id="fig|266835.9.peg.4418"/>
<dbReference type="eggNOG" id="COG0130">
    <property type="taxonomic scope" value="Bacteria"/>
</dbReference>
<dbReference type="HOGENOM" id="CLU_032087_0_3_5"/>
<dbReference type="Proteomes" id="UP000000552">
    <property type="component" value="Chromosome"/>
</dbReference>
<dbReference type="GO" id="GO:0003723">
    <property type="term" value="F:RNA binding"/>
    <property type="evidence" value="ECO:0007669"/>
    <property type="project" value="InterPro"/>
</dbReference>
<dbReference type="GO" id="GO:0160148">
    <property type="term" value="F:tRNA pseudouridine(55) synthase activity"/>
    <property type="evidence" value="ECO:0007669"/>
    <property type="project" value="UniProtKB-EC"/>
</dbReference>
<dbReference type="GO" id="GO:1990481">
    <property type="term" value="P:mRNA pseudouridine synthesis"/>
    <property type="evidence" value="ECO:0007669"/>
    <property type="project" value="TreeGrafter"/>
</dbReference>
<dbReference type="GO" id="GO:0031119">
    <property type="term" value="P:tRNA pseudouridine synthesis"/>
    <property type="evidence" value="ECO:0007669"/>
    <property type="project" value="UniProtKB-UniRule"/>
</dbReference>
<dbReference type="CDD" id="cd02573">
    <property type="entry name" value="PseudoU_synth_EcTruB"/>
    <property type="match status" value="1"/>
</dbReference>
<dbReference type="Gene3D" id="3.30.2350.10">
    <property type="entry name" value="Pseudouridine synthase"/>
    <property type="match status" value="1"/>
</dbReference>
<dbReference type="HAMAP" id="MF_01080">
    <property type="entry name" value="TruB_bact"/>
    <property type="match status" value="1"/>
</dbReference>
<dbReference type="InterPro" id="IPR020103">
    <property type="entry name" value="PsdUridine_synth_cat_dom_sf"/>
</dbReference>
<dbReference type="InterPro" id="IPR002501">
    <property type="entry name" value="PsdUridine_synth_N"/>
</dbReference>
<dbReference type="InterPro" id="IPR014780">
    <property type="entry name" value="tRNA_psdUridine_synth_TruB"/>
</dbReference>
<dbReference type="InterPro" id="IPR032819">
    <property type="entry name" value="TruB_C"/>
</dbReference>
<dbReference type="NCBIfam" id="TIGR00431">
    <property type="entry name" value="TruB"/>
    <property type="match status" value="1"/>
</dbReference>
<dbReference type="PANTHER" id="PTHR13767:SF2">
    <property type="entry name" value="PSEUDOURIDYLATE SYNTHASE TRUB1"/>
    <property type="match status" value="1"/>
</dbReference>
<dbReference type="PANTHER" id="PTHR13767">
    <property type="entry name" value="TRNA-PSEUDOURIDINE SYNTHASE"/>
    <property type="match status" value="1"/>
</dbReference>
<dbReference type="Pfam" id="PF16198">
    <property type="entry name" value="TruB_C_2"/>
    <property type="match status" value="1"/>
</dbReference>
<dbReference type="Pfam" id="PF01509">
    <property type="entry name" value="TruB_N"/>
    <property type="match status" value="1"/>
</dbReference>
<dbReference type="SUPFAM" id="SSF55120">
    <property type="entry name" value="Pseudouridine synthase"/>
    <property type="match status" value="1"/>
</dbReference>
<gene>
    <name evidence="1" type="primary">truB</name>
    <name type="ordered locus">mlr5558</name>
</gene>
<organism>
    <name type="scientific">Mesorhizobium japonicum (strain LMG 29417 / CECT 9101 / MAFF 303099)</name>
    <name type="common">Mesorhizobium loti (strain MAFF 303099)</name>
    <dbReference type="NCBI Taxonomy" id="266835"/>
    <lineage>
        <taxon>Bacteria</taxon>
        <taxon>Pseudomonadati</taxon>
        <taxon>Pseudomonadota</taxon>
        <taxon>Alphaproteobacteria</taxon>
        <taxon>Hyphomicrobiales</taxon>
        <taxon>Phyllobacteriaceae</taxon>
        <taxon>Mesorhizobium</taxon>
    </lineage>
</organism>
<proteinExistence type="inferred from homology"/>
<sequence>MGRRGKKKGRPVSGWVVLDKPVGMGSTEAVSKIKWLFQAEKAGHAGTLDPLASGMLPIALGEATKTVPYVQDGAKIYRFTVAWGQERSTDDLEGPVTKSSDLRPAEAEVKALLPKYTGVIMQTPPQFSAIKIAGERAYDLAREGETVDIPAREIEIGRLDIIEHHADHTVFEVECGKGTYVRSLARDMGRDLGCFGHISDLRRVEVEPFTSEDFVTIAELEAARFGAQGEDKPEPADDADAIDVPVDFGAIDALLVDTSAALDCLPQIAISDDAATKIRLGNPVIIRGRDAPVEAEEACATARGKLVAIGAIEQGMFKPKRVFAG</sequence>
<reference key="1">
    <citation type="journal article" date="2000" name="DNA Res.">
        <title>Complete genome structure of the nitrogen-fixing symbiotic bacterium Mesorhizobium loti.</title>
        <authorList>
            <person name="Kaneko T."/>
            <person name="Nakamura Y."/>
            <person name="Sato S."/>
            <person name="Asamizu E."/>
            <person name="Kato T."/>
            <person name="Sasamoto S."/>
            <person name="Watanabe A."/>
            <person name="Idesawa K."/>
            <person name="Ishikawa A."/>
            <person name="Kawashima K."/>
            <person name="Kimura T."/>
            <person name="Kishida Y."/>
            <person name="Kiyokawa C."/>
            <person name="Kohara M."/>
            <person name="Matsumoto M."/>
            <person name="Matsuno A."/>
            <person name="Mochizuki Y."/>
            <person name="Nakayama S."/>
            <person name="Nakazaki N."/>
            <person name="Shimpo S."/>
            <person name="Sugimoto M."/>
            <person name="Takeuchi C."/>
            <person name="Yamada M."/>
            <person name="Tabata S."/>
        </authorList>
    </citation>
    <scope>NUCLEOTIDE SEQUENCE [LARGE SCALE GENOMIC DNA]</scope>
    <source>
        <strain>LMG 29417 / CECT 9101 / MAFF 303099</strain>
    </source>
</reference>
<accession>Q98BI6</accession>